<keyword id="KW-0067">ATP-binding</keyword>
<keyword id="KW-0547">Nucleotide-binding</keyword>
<keyword id="KW-0346">Stress response</keyword>
<reference key="1">
    <citation type="journal article" date="1993" name="Mol. Biochem. Parasitol.">
        <title>Sequence and genomic organization of the hsp70 genes of Leishmania amazonensis.</title>
        <authorList>
            <person name="Bock J.H."/>
            <person name="Langer P.J."/>
        </authorList>
    </citation>
    <scope>NUCLEOTIDE SEQUENCE [GENOMIC DNA / MRNA]</scope>
    <source>
        <strain>MHOM/BR/77/LTB0016/C1S1</strain>
    </source>
</reference>
<feature type="chain" id="PRO_0000078302" description="Heat shock 70 kDa protein">
    <location>
        <begin position="1"/>
        <end position="652"/>
    </location>
</feature>
<feature type="region of interest" description="Disordered" evidence="1">
    <location>
        <begin position="619"/>
        <end position="652"/>
    </location>
</feature>
<feature type="compositionally biased region" description="Low complexity" evidence="1">
    <location>
        <begin position="626"/>
        <end position="646"/>
    </location>
</feature>
<feature type="sequence variant">
    <original>L</original>
    <variation>S</variation>
    <location>
        <position position="81"/>
    </location>
</feature>
<feature type="sequence variant">
    <original>S</original>
    <variation>G</variation>
    <location>
        <position position="632"/>
    </location>
</feature>
<sequence>MTFDGAIGIDLGTTYSCVGVWQNDRVEIIANDQGNRTTPSYVAFTDSERLIGDAAKNQVAMNPHNTVFDAKRLIGRKFNDLVVQSDMKHWPFKVTTKGDDKPVISVQYRGEEKTFTPEKISSMVLLKMKETAEAYLGKQVKKAVVTVPAYFNDSQRQATKDAGTISGLEVLRIINEPTAAAIAYGLDKGDDGKERNVLIFDLGGGTFDVTLLTIDGGIFEVKATNGDTHLGGEDFDNRLVTFFTEEFKRKNKGKNLASSHRSLRRLRTACERAKRTLSSATQATIEIDALFDNVDFQATINRARFEELCGDLFRSTIQPVERVLQDAKMDKRSVHDVVLVGGSTRIPKVQSLVSDFFGGKELNKSINPDEAVAYGAAVQAFILTGGKSKQTEGLLLLDVTPLTLGIETAGGVMTALIKRNTTIPTKKSQIFSTYADNQPGVHIQVFEGERAMTKDCHLLGTFDLSGIPPAPRGVPQIEVTFDLDANGILNVSAEEKGTGKRNQITITNDKGRLSKDEIERMVNDAMKYEADDKAQADRVEAKNGLENYAYSMKNTLGDSNVSGKLDDTDKSTLNKEIEAALEWLSSNQEATKEEYEHKQKELENVCNPIMTKMYQSMGGGAGGMAGMPDMSSMSGARPAGGASSGPKVEEVD</sequence>
<organism>
    <name type="scientific">Leishmania amazonensis</name>
    <dbReference type="NCBI Taxonomy" id="5659"/>
    <lineage>
        <taxon>Eukaryota</taxon>
        <taxon>Discoba</taxon>
        <taxon>Euglenozoa</taxon>
        <taxon>Kinetoplastea</taxon>
        <taxon>Metakinetoplastina</taxon>
        <taxon>Trypanosomatida</taxon>
        <taxon>Trypanosomatidae</taxon>
        <taxon>Leishmaniinae</taxon>
        <taxon>Leishmania</taxon>
    </lineage>
</organism>
<gene>
    <name type="primary">HSP70</name>
</gene>
<protein>
    <recommendedName>
        <fullName>Heat shock 70 kDa protein</fullName>
    </recommendedName>
</protein>
<dbReference type="EMBL" id="L14604">
    <property type="protein sequence ID" value="AAA53690.1"/>
    <property type="molecule type" value="mRNA"/>
</dbReference>
<dbReference type="EMBL" id="L14605">
    <property type="protein sequence ID" value="AAD15233.1"/>
    <property type="molecule type" value="Genomic_DNA"/>
</dbReference>
<dbReference type="SMR" id="Q07437"/>
<dbReference type="VEuPathDB" id="TriTrypDB:LAMA_000514000"/>
<dbReference type="VEuPathDB" id="TriTrypDB:LAMAPH8_000610900"/>
<dbReference type="GO" id="GO:0005524">
    <property type="term" value="F:ATP binding"/>
    <property type="evidence" value="ECO:0007669"/>
    <property type="project" value="UniProtKB-KW"/>
</dbReference>
<dbReference type="GO" id="GO:0140662">
    <property type="term" value="F:ATP-dependent protein folding chaperone"/>
    <property type="evidence" value="ECO:0007669"/>
    <property type="project" value="InterPro"/>
</dbReference>
<dbReference type="CDD" id="cd10233">
    <property type="entry name" value="ASKHA_NBD_HSP70_HSPA1"/>
    <property type="match status" value="1"/>
</dbReference>
<dbReference type="FunFam" id="2.60.34.10:FF:000002">
    <property type="entry name" value="Heat shock 70 kDa"/>
    <property type="match status" value="1"/>
</dbReference>
<dbReference type="FunFam" id="3.90.640.10:FF:000002">
    <property type="entry name" value="Heat shock 70 kDa"/>
    <property type="match status" value="1"/>
</dbReference>
<dbReference type="FunFam" id="1.20.1270.10:FF:000055">
    <property type="entry name" value="Heat shock 70 kDa protein"/>
    <property type="match status" value="1"/>
</dbReference>
<dbReference type="FunFam" id="3.30.420.40:FF:000172">
    <property type="entry name" value="Heat shock 70 kDa protein"/>
    <property type="match status" value="1"/>
</dbReference>
<dbReference type="FunFam" id="3.30.30.30:FF:000001">
    <property type="entry name" value="heat shock 70 kDa protein-like"/>
    <property type="match status" value="1"/>
</dbReference>
<dbReference type="FunFam" id="3.30.420.40:FF:000026">
    <property type="entry name" value="Heat shock protein 70"/>
    <property type="match status" value="1"/>
</dbReference>
<dbReference type="Gene3D" id="1.20.1270.10">
    <property type="match status" value="1"/>
</dbReference>
<dbReference type="Gene3D" id="3.30.30.30">
    <property type="match status" value="1"/>
</dbReference>
<dbReference type="Gene3D" id="3.30.420.40">
    <property type="match status" value="2"/>
</dbReference>
<dbReference type="Gene3D" id="3.90.640.10">
    <property type="entry name" value="Actin, Chain A, domain 4"/>
    <property type="match status" value="1"/>
</dbReference>
<dbReference type="Gene3D" id="2.60.34.10">
    <property type="entry name" value="Substrate Binding Domain Of DNAk, Chain A, domain 1"/>
    <property type="match status" value="1"/>
</dbReference>
<dbReference type="InterPro" id="IPR043129">
    <property type="entry name" value="ATPase_NBD"/>
</dbReference>
<dbReference type="InterPro" id="IPR018181">
    <property type="entry name" value="Heat_shock_70_CS"/>
</dbReference>
<dbReference type="InterPro" id="IPR029048">
    <property type="entry name" value="HSP70_C_sf"/>
</dbReference>
<dbReference type="InterPro" id="IPR029047">
    <property type="entry name" value="HSP70_peptide-bd_sf"/>
</dbReference>
<dbReference type="InterPro" id="IPR013126">
    <property type="entry name" value="Hsp_70_fam"/>
</dbReference>
<dbReference type="NCBIfam" id="NF001413">
    <property type="entry name" value="PRK00290.1"/>
    <property type="match status" value="1"/>
</dbReference>
<dbReference type="PANTHER" id="PTHR19375">
    <property type="entry name" value="HEAT SHOCK PROTEIN 70KDA"/>
    <property type="match status" value="1"/>
</dbReference>
<dbReference type="Pfam" id="PF00012">
    <property type="entry name" value="HSP70"/>
    <property type="match status" value="1"/>
</dbReference>
<dbReference type="PRINTS" id="PR00301">
    <property type="entry name" value="HEATSHOCK70"/>
</dbReference>
<dbReference type="SUPFAM" id="SSF53067">
    <property type="entry name" value="Actin-like ATPase domain"/>
    <property type="match status" value="2"/>
</dbReference>
<dbReference type="SUPFAM" id="SSF100934">
    <property type="entry name" value="Heat shock protein 70kD (HSP70), C-terminal subdomain"/>
    <property type="match status" value="1"/>
</dbReference>
<dbReference type="SUPFAM" id="SSF100920">
    <property type="entry name" value="Heat shock protein 70kD (HSP70), peptide-binding domain"/>
    <property type="match status" value="1"/>
</dbReference>
<dbReference type="PROSITE" id="PS00297">
    <property type="entry name" value="HSP70_1"/>
    <property type="match status" value="1"/>
</dbReference>
<dbReference type="PROSITE" id="PS00329">
    <property type="entry name" value="HSP70_2"/>
    <property type="match status" value="1"/>
</dbReference>
<dbReference type="PROSITE" id="PS01036">
    <property type="entry name" value="HSP70_3"/>
    <property type="match status" value="1"/>
</dbReference>
<comment type="similarity">
    <text evidence="2">Belongs to the heat shock protein 70 family.</text>
</comment>
<evidence type="ECO:0000256" key="1">
    <source>
        <dbReference type="SAM" id="MobiDB-lite"/>
    </source>
</evidence>
<evidence type="ECO:0000305" key="2"/>
<proteinExistence type="evidence at transcript level"/>
<accession>Q07437</accession>
<name>HSP70_LEIAM</name>